<organism>
    <name type="scientific">Escherichia coli (strain 55989 / EAEC)</name>
    <dbReference type="NCBI Taxonomy" id="585055"/>
    <lineage>
        <taxon>Bacteria</taxon>
        <taxon>Pseudomonadati</taxon>
        <taxon>Pseudomonadota</taxon>
        <taxon>Gammaproteobacteria</taxon>
        <taxon>Enterobacterales</taxon>
        <taxon>Enterobacteriaceae</taxon>
        <taxon>Escherichia</taxon>
    </lineage>
</organism>
<comment type="subcellular location">
    <subcellularLocation>
        <location evidence="1">Cell inner membrane</location>
        <topology evidence="1">Multi-pass membrane protein</topology>
    </subcellularLocation>
</comment>
<comment type="similarity">
    <text evidence="1">Belongs to the UPF0761 family.</text>
</comment>
<feature type="chain" id="PRO_1000147668" description="UPF0761 membrane protein YihY">
    <location>
        <begin position="1"/>
        <end position="290"/>
    </location>
</feature>
<feature type="transmembrane region" description="Helical" evidence="1">
    <location>
        <begin position="44"/>
        <end position="64"/>
    </location>
</feature>
<feature type="transmembrane region" description="Helical" evidence="1">
    <location>
        <begin position="104"/>
        <end position="124"/>
    </location>
</feature>
<feature type="transmembrane region" description="Helical" evidence="1">
    <location>
        <begin position="140"/>
        <end position="160"/>
    </location>
</feature>
<feature type="transmembrane region" description="Helical" evidence="1">
    <location>
        <begin position="183"/>
        <end position="203"/>
    </location>
</feature>
<feature type="transmembrane region" description="Helical" evidence="1">
    <location>
        <begin position="210"/>
        <end position="230"/>
    </location>
</feature>
<feature type="transmembrane region" description="Helical" evidence="1">
    <location>
        <begin position="244"/>
        <end position="264"/>
    </location>
</feature>
<name>YIHY_ECO55</name>
<keyword id="KW-0997">Cell inner membrane</keyword>
<keyword id="KW-1003">Cell membrane</keyword>
<keyword id="KW-0472">Membrane</keyword>
<keyword id="KW-1185">Reference proteome</keyword>
<keyword id="KW-0812">Transmembrane</keyword>
<keyword id="KW-1133">Transmembrane helix</keyword>
<gene>
    <name evidence="1" type="primary">yihY</name>
    <name type="ordered locus">EC55989_4360</name>
</gene>
<proteinExistence type="inferred from homology"/>
<protein>
    <recommendedName>
        <fullName evidence="1">UPF0761 membrane protein YihY</fullName>
    </recommendedName>
</protein>
<accession>B7L9D9</accession>
<sequence length="290" mass="32839">MLKTIQDKARHRTRPLWAWLKLLWQRIDEDNMTTLAGNLAYVSLLSLVPLVAVVFALFAAFPMFSDVSIQLRHFIFANFLPATGDVIQRYIEQFVANSNKMTAVGACGLIVTALLLMYSIDSALNTIWRSKRARPKIYSFAVYWMILTLGPLLAGASLAISSYLLSLRWASDLNTVIDNVLRIFPLLLSWISFWLLYSIVPTIRVPNRDAIVGAFVAALLFEAGKKGFALYITMFPSYQLIYGVLAVIPILFVWVYWTWCIVLLGAEITVTLGEYRKLKQAAEQEEDDEP</sequence>
<evidence type="ECO:0000255" key="1">
    <source>
        <dbReference type="HAMAP-Rule" id="MF_00672"/>
    </source>
</evidence>
<dbReference type="EMBL" id="CU928145">
    <property type="protein sequence ID" value="CAV01054.1"/>
    <property type="molecule type" value="Genomic_DNA"/>
</dbReference>
<dbReference type="RefSeq" id="WP_000920762.1">
    <property type="nucleotide sequence ID" value="NZ_CP028304.1"/>
</dbReference>
<dbReference type="KEGG" id="eck:EC55989_4360"/>
<dbReference type="HOGENOM" id="CLU_032288_0_0_6"/>
<dbReference type="Proteomes" id="UP000000746">
    <property type="component" value="Chromosome"/>
</dbReference>
<dbReference type="GO" id="GO:0005886">
    <property type="term" value="C:plasma membrane"/>
    <property type="evidence" value="ECO:0007669"/>
    <property type="project" value="UniProtKB-SubCell"/>
</dbReference>
<dbReference type="HAMAP" id="MF_00672">
    <property type="entry name" value="UPF0761"/>
    <property type="match status" value="1"/>
</dbReference>
<dbReference type="InterPro" id="IPR023679">
    <property type="entry name" value="UPF0761_bac"/>
</dbReference>
<dbReference type="InterPro" id="IPR017039">
    <property type="entry name" value="Virul_fac_BrkB"/>
</dbReference>
<dbReference type="NCBIfam" id="NF002457">
    <property type="entry name" value="PRK01637.1"/>
    <property type="match status" value="1"/>
</dbReference>
<dbReference type="NCBIfam" id="TIGR00765">
    <property type="entry name" value="yihY_not_rbn"/>
    <property type="match status" value="1"/>
</dbReference>
<dbReference type="PANTHER" id="PTHR30213">
    <property type="entry name" value="INNER MEMBRANE PROTEIN YHJD"/>
    <property type="match status" value="1"/>
</dbReference>
<dbReference type="PANTHER" id="PTHR30213:SF0">
    <property type="entry name" value="UPF0761 MEMBRANE PROTEIN YIHY"/>
    <property type="match status" value="1"/>
</dbReference>
<dbReference type="Pfam" id="PF03631">
    <property type="entry name" value="Virul_fac_BrkB"/>
    <property type="match status" value="1"/>
</dbReference>
<dbReference type="PIRSF" id="PIRSF035875">
    <property type="entry name" value="RNase_BN"/>
    <property type="match status" value="1"/>
</dbReference>
<reference key="1">
    <citation type="journal article" date="2009" name="PLoS Genet.">
        <title>Organised genome dynamics in the Escherichia coli species results in highly diverse adaptive paths.</title>
        <authorList>
            <person name="Touchon M."/>
            <person name="Hoede C."/>
            <person name="Tenaillon O."/>
            <person name="Barbe V."/>
            <person name="Baeriswyl S."/>
            <person name="Bidet P."/>
            <person name="Bingen E."/>
            <person name="Bonacorsi S."/>
            <person name="Bouchier C."/>
            <person name="Bouvet O."/>
            <person name="Calteau A."/>
            <person name="Chiapello H."/>
            <person name="Clermont O."/>
            <person name="Cruveiller S."/>
            <person name="Danchin A."/>
            <person name="Diard M."/>
            <person name="Dossat C."/>
            <person name="Karoui M.E."/>
            <person name="Frapy E."/>
            <person name="Garry L."/>
            <person name="Ghigo J.M."/>
            <person name="Gilles A.M."/>
            <person name="Johnson J."/>
            <person name="Le Bouguenec C."/>
            <person name="Lescat M."/>
            <person name="Mangenot S."/>
            <person name="Martinez-Jehanne V."/>
            <person name="Matic I."/>
            <person name="Nassif X."/>
            <person name="Oztas S."/>
            <person name="Petit M.A."/>
            <person name="Pichon C."/>
            <person name="Rouy Z."/>
            <person name="Ruf C.S."/>
            <person name="Schneider D."/>
            <person name="Tourret J."/>
            <person name="Vacherie B."/>
            <person name="Vallenet D."/>
            <person name="Medigue C."/>
            <person name="Rocha E.P.C."/>
            <person name="Denamur E."/>
        </authorList>
    </citation>
    <scope>NUCLEOTIDE SEQUENCE [LARGE SCALE GENOMIC DNA]</scope>
    <source>
        <strain>55989 / EAEC</strain>
    </source>
</reference>